<proteinExistence type="inferred from homology"/>
<accession>A5D1P4</accession>
<reference key="1">
    <citation type="journal article" date="2008" name="Genome Res.">
        <title>The genome of Pelotomaculum thermopropionicum reveals niche-associated evolution in anaerobic microbiota.</title>
        <authorList>
            <person name="Kosaka T."/>
            <person name="Kato S."/>
            <person name="Shimoyama T."/>
            <person name="Ishii S."/>
            <person name="Abe T."/>
            <person name="Watanabe K."/>
        </authorList>
    </citation>
    <scope>NUCLEOTIDE SEQUENCE [LARGE SCALE GENOMIC DNA]</scope>
    <source>
        <strain>DSM 13744 / JCM 10971 / SI</strain>
    </source>
</reference>
<name>ADDB_PELTS</name>
<dbReference type="EC" id="3.1.-.-" evidence="1"/>
<dbReference type="EMBL" id="AP009389">
    <property type="protein sequence ID" value="BAF59846.1"/>
    <property type="molecule type" value="Genomic_DNA"/>
</dbReference>
<dbReference type="SMR" id="A5D1P4"/>
<dbReference type="STRING" id="370438.PTH_1665"/>
<dbReference type="KEGG" id="pth:PTH_1665"/>
<dbReference type="eggNOG" id="COG3857">
    <property type="taxonomic scope" value="Bacteria"/>
</dbReference>
<dbReference type="HOGENOM" id="CLU_007838_0_0_9"/>
<dbReference type="Proteomes" id="UP000006556">
    <property type="component" value="Chromosome"/>
</dbReference>
<dbReference type="GO" id="GO:0051539">
    <property type="term" value="F:4 iron, 4 sulfur cluster binding"/>
    <property type="evidence" value="ECO:0007669"/>
    <property type="project" value="UniProtKB-KW"/>
</dbReference>
<dbReference type="GO" id="GO:0008409">
    <property type="term" value="F:5'-3' exonuclease activity"/>
    <property type="evidence" value="ECO:0007669"/>
    <property type="project" value="UniProtKB-UniRule"/>
</dbReference>
<dbReference type="GO" id="GO:0005524">
    <property type="term" value="F:ATP binding"/>
    <property type="evidence" value="ECO:0007669"/>
    <property type="project" value="UniProtKB-UniRule"/>
</dbReference>
<dbReference type="GO" id="GO:0003690">
    <property type="term" value="F:double-stranded DNA binding"/>
    <property type="evidence" value="ECO:0007669"/>
    <property type="project" value="UniProtKB-UniRule"/>
</dbReference>
<dbReference type="GO" id="GO:0004386">
    <property type="term" value="F:helicase activity"/>
    <property type="evidence" value="ECO:0007669"/>
    <property type="project" value="UniProtKB-KW"/>
</dbReference>
<dbReference type="GO" id="GO:0046872">
    <property type="term" value="F:metal ion binding"/>
    <property type="evidence" value="ECO:0007669"/>
    <property type="project" value="UniProtKB-KW"/>
</dbReference>
<dbReference type="GO" id="GO:0000724">
    <property type="term" value="P:double-strand break repair via homologous recombination"/>
    <property type="evidence" value="ECO:0007669"/>
    <property type="project" value="UniProtKB-UniRule"/>
</dbReference>
<dbReference type="Gene3D" id="3.90.320.10">
    <property type="match status" value="1"/>
</dbReference>
<dbReference type="Gene3D" id="6.10.140.1030">
    <property type="match status" value="1"/>
</dbReference>
<dbReference type="Gene3D" id="3.40.50.300">
    <property type="entry name" value="P-loop containing nucleotide triphosphate hydrolases"/>
    <property type="match status" value="4"/>
</dbReference>
<dbReference type="HAMAP" id="MF_01452">
    <property type="entry name" value="AddB_type1"/>
    <property type="match status" value="1"/>
</dbReference>
<dbReference type="InterPro" id="IPR049035">
    <property type="entry name" value="ADDB_N"/>
</dbReference>
<dbReference type="InterPro" id="IPR014140">
    <property type="entry name" value="DNA_helicase_suAddB"/>
</dbReference>
<dbReference type="InterPro" id="IPR014017">
    <property type="entry name" value="DNA_helicase_UvrD-like_C"/>
</dbReference>
<dbReference type="InterPro" id="IPR027417">
    <property type="entry name" value="P-loop_NTPase"/>
</dbReference>
<dbReference type="InterPro" id="IPR011604">
    <property type="entry name" value="PDDEXK-like_dom_sf"/>
</dbReference>
<dbReference type="InterPro" id="IPR038726">
    <property type="entry name" value="PDDEXK_AddAB-type"/>
</dbReference>
<dbReference type="NCBIfam" id="TIGR02773">
    <property type="entry name" value="addB_Gpos"/>
    <property type="match status" value="1"/>
</dbReference>
<dbReference type="PANTHER" id="PTHR30591">
    <property type="entry name" value="RECBCD ENZYME SUBUNIT RECC"/>
    <property type="match status" value="1"/>
</dbReference>
<dbReference type="PANTHER" id="PTHR30591:SF1">
    <property type="entry name" value="RECBCD ENZYME SUBUNIT RECC"/>
    <property type="match status" value="1"/>
</dbReference>
<dbReference type="Pfam" id="PF21445">
    <property type="entry name" value="ADDB_N"/>
    <property type="match status" value="1"/>
</dbReference>
<dbReference type="Pfam" id="PF12705">
    <property type="entry name" value="PDDEXK_1"/>
    <property type="match status" value="1"/>
</dbReference>
<dbReference type="SUPFAM" id="SSF52540">
    <property type="entry name" value="P-loop containing nucleoside triphosphate hydrolases"/>
    <property type="match status" value="2"/>
</dbReference>
<dbReference type="PROSITE" id="PS51198">
    <property type="entry name" value="UVRD_HELICASE_ATP_BIND"/>
    <property type="match status" value="1"/>
</dbReference>
<dbReference type="PROSITE" id="PS51217">
    <property type="entry name" value="UVRD_HELICASE_CTER"/>
    <property type="match status" value="1"/>
</dbReference>
<protein>
    <recommendedName>
        <fullName evidence="1">ATP-dependent helicase/deoxyribonuclease subunit B</fullName>
        <ecNumber evidence="1">3.1.-.-</ecNumber>
    </recommendedName>
    <alternativeName>
        <fullName evidence="1">ATP-dependent helicase/nuclease subunit AddB</fullName>
    </alternativeName>
</protein>
<evidence type="ECO:0000255" key="1">
    <source>
        <dbReference type="HAMAP-Rule" id="MF_01452"/>
    </source>
</evidence>
<feature type="chain" id="PRO_0000379203" description="ATP-dependent helicase/deoxyribonuclease subunit B">
    <location>
        <begin position="1"/>
        <end position="1157"/>
    </location>
</feature>
<feature type="domain" description="UvrD-like helicase ATP-binding" evidence="1">
    <location>
        <begin position="1"/>
        <end position="299"/>
    </location>
</feature>
<feature type="domain" description="UvrD-like helicase C-terminal" evidence="1">
    <location>
        <begin position="279"/>
        <end position="590"/>
    </location>
</feature>
<feature type="binding site" evidence="1">
    <location>
        <begin position="8"/>
        <end position="15"/>
    </location>
    <ligand>
        <name>ATP</name>
        <dbReference type="ChEBI" id="CHEBI:30616"/>
    </ligand>
</feature>
<feature type="binding site" evidence="1">
    <location>
        <position position="792"/>
    </location>
    <ligand>
        <name>[4Fe-4S] cluster</name>
        <dbReference type="ChEBI" id="CHEBI:49883"/>
    </ligand>
</feature>
<feature type="binding site" evidence="1">
    <location>
        <position position="1112"/>
    </location>
    <ligand>
        <name>[4Fe-4S] cluster</name>
        <dbReference type="ChEBI" id="CHEBI:49883"/>
    </ligand>
</feature>
<feature type="binding site" evidence="1">
    <location>
        <position position="1115"/>
    </location>
    <ligand>
        <name>[4Fe-4S] cluster</name>
        <dbReference type="ChEBI" id="CHEBI:49883"/>
    </ligand>
</feature>
<feature type="binding site" evidence="1">
    <location>
        <position position="1121"/>
    </location>
    <ligand>
        <name>[4Fe-4S] cluster</name>
        <dbReference type="ChEBI" id="CHEBI:49883"/>
    </ligand>
</feature>
<organism>
    <name type="scientific">Pelotomaculum thermopropionicum (strain DSM 13744 / JCM 10971 / SI)</name>
    <dbReference type="NCBI Taxonomy" id="370438"/>
    <lineage>
        <taxon>Bacteria</taxon>
        <taxon>Bacillati</taxon>
        <taxon>Bacillota</taxon>
        <taxon>Clostridia</taxon>
        <taxon>Eubacteriales</taxon>
        <taxon>Desulfotomaculaceae</taxon>
        <taxon>Pelotomaculum</taxon>
    </lineage>
</organism>
<sequence length="1157" mass="129253">MSIRFIIGRAGAGKTRACLEAIRKELLARPYGPPLILLVPEQATFQIEYALAATPGLSGFIRARVLSFRRLAYRVLREVGGAARAHIGELGKRMVLRRLLEQRRSELRVLGRSSGRPGFADTLARTLGEMKTYCIGPDELARAAFDLREKGGAALLADKLEDLAKLCFDLEDYLAGRFTDPDDYLNLLADCLELSAEVRGTEVWVDGFSGFTPQEYRVLAALARTASRVNITLCADPAALSGKIDETSLFFPVRETYDRLLKMALQERIPLERPLILGGNTARFKSPAISHLEKYFFVRPAPPCLNCSEGVVLAAAANPKAEAEGVAREITALCRDRGYRYRDIVILLRDVDSYAGLISSIFADHGIPVFIDQKRPVMHHPMVELVRSALEAVTEDWAFDPVFRYLKTDLVPLSREEVDLLENYVLAHGIRGSRWTDGRPWEYRRELTLEEDPGLNGSESVELEKVNRIRHQATADLLEFCRSFMQAKNVREMSTALFNLLTGLKVPEQLESWSRQAEKEGRLEAAREHSLVWSGFTALLDQVVEALGDEVLEPGEYAAVIDAGLESLRLGLIPPGLDQVLVASLERSRNPEMRAAFVMGVNDGVLPARTFDQGIFSDLERERLKAAGLELAPGGRRKFFEEQYLVYIALTRSSERIYLSYPLADGEGRALMPSPIVARVKELLPDVEERVWPVEPNAALLDDLEFVTGPRRTLSYLASQMREFKAGRRIDPLWWDVYSWFAAGEMREHCKRVLSGLFHSNREDRLPPAVSMALYGRPLRASVSGLEKFRACPFAHFLSYGLKLKERAIFKLDAPDLGRFFHAALKLFGDRVREQGLDWGQLDREQCQEMAGEVVDLLAPRLSSEILLSTARRRYLTGKLRRTVQRAALVLAEHSRRSKFRPVGLELSFGPDGDLPAPVFTLADGSEMAVSGRIDRIEAAPSDEGVYLRIIDFKSGKVTVKLTDIYHGLKLQLLAYLDVALEHARTLTGGNGLPGAVLYFRIDDPLVNTDGPVPPGEEVEREILKKLRMTGLVLADPKAVRLMDAGLDGISDLIPVQIKADGSFAARSAVLTREQFALLRSYLRFQLASAGSEIIGGTVEIAPYRKGRYRSCQSCPFRPVCQFDLLVDGNVYRSIKDEDEGAIWSKLGRMCRKGWGQ</sequence>
<keyword id="KW-0004">4Fe-4S</keyword>
<keyword id="KW-0067">ATP-binding</keyword>
<keyword id="KW-0227">DNA damage</keyword>
<keyword id="KW-0234">DNA repair</keyword>
<keyword id="KW-0238">DNA-binding</keyword>
<keyword id="KW-0269">Exonuclease</keyword>
<keyword id="KW-0347">Helicase</keyword>
<keyword id="KW-0378">Hydrolase</keyword>
<keyword id="KW-0408">Iron</keyword>
<keyword id="KW-0411">Iron-sulfur</keyword>
<keyword id="KW-0479">Metal-binding</keyword>
<keyword id="KW-0540">Nuclease</keyword>
<keyword id="KW-0547">Nucleotide-binding</keyword>
<keyword id="KW-1185">Reference proteome</keyword>
<gene>
    <name evidence="1" type="primary">addB</name>
    <name type="ordered locus">PTH_1665</name>
</gene>
<comment type="function">
    <text evidence="1">The heterodimer acts as both an ATP-dependent DNA helicase and an ATP-dependent, dual-direction single-stranded exonuclease. Recognizes the chi site generating a DNA molecule suitable for the initiation of homologous recombination. The AddB subunit has 5' -&gt; 3' nuclease activity but not helicase activity.</text>
</comment>
<comment type="cofactor">
    <cofactor evidence="1">
        <name>Mg(2+)</name>
        <dbReference type="ChEBI" id="CHEBI:18420"/>
    </cofactor>
</comment>
<comment type="cofactor">
    <cofactor evidence="1">
        <name>[4Fe-4S] cluster</name>
        <dbReference type="ChEBI" id="CHEBI:49883"/>
    </cofactor>
    <text evidence="1">Binds 1 [4Fe-4S] cluster.</text>
</comment>
<comment type="subunit">
    <text evidence="1">Heterodimer of AddA and AddB.</text>
</comment>
<comment type="miscellaneous">
    <text evidence="1">Despite having conserved helicase domains, this subunit does not have helicase activity.</text>
</comment>
<comment type="similarity">
    <text evidence="1">Belongs to the helicase family. AddB/RexB type 1 subfamily.</text>
</comment>